<reference key="1">
    <citation type="journal article" date="1998" name="Biochim. Biophys. Acta">
        <title>Primary structure of two major cuticular proteins from the migratory locust, Locusta migratoria, and their identification in polyacrylamide gels by mass spectrometry.</title>
        <authorList>
            <person name="Jensen C."/>
            <person name="Andersen S.O."/>
            <person name="Roepstorff P."/>
        </authorList>
    </citation>
    <scope>PROTEIN SEQUENCE</scope>
    <source>
        <tissue>Cuticle</tissue>
    </source>
</reference>
<dbReference type="GO" id="GO:0031012">
    <property type="term" value="C:extracellular matrix"/>
    <property type="evidence" value="ECO:0007669"/>
    <property type="project" value="TreeGrafter"/>
</dbReference>
<dbReference type="GO" id="GO:0005615">
    <property type="term" value="C:extracellular space"/>
    <property type="evidence" value="ECO:0007669"/>
    <property type="project" value="TreeGrafter"/>
</dbReference>
<dbReference type="GO" id="GO:0042302">
    <property type="term" value="F:structural constituent of cuticle"/>
    <property type="evidence" value="ECO:0007669"/>
    <property type="project" value="UniProtKB-KW"/>
</dbReference>
<dbReference type="InterPro" id="IPR031311">
    <property type="entry name" value="CHIT_BIND_RR_consensus"/>
</dbReference>
<dbReference type="InterPro" id="IPR000618">
    <property type="entry name" value="Insect_cuticle"/>
</dbReference>
<dbReference type="InterPro" id="IPR051217">
    <property type="entry name" value="Insect_Cuticle_Struc_Prot"/>
</dbReference>
<dbReference type="PANTHER" id="PTHR12236:SF75">
    <property type="entry name" value="CUTICULAR PROTEIN 62BB, ISOFORM A"/>
    <property type="match status" value="1"/>
</dbReference>
<dbReference type="PANTHER" id="PTHR12236">
    <property type="entry name" value="STRUCTURAL CONTITUENT OF CUTICLE"/>
    <property type="match status" value="1"/>
</dbReference>
<dbReference type="Pfam" id="PF00379">
    <property type="entry name" value="Chitin_bind_4"/>
    <property type="match status" value="1"/>
</dbReference>
<dbReference type="PRINTS" id="PR00947">
    <property type="entry name" value="CUTICLE"/>
</dbReference>
<dbReference type="PROSITE" id="PS00233">
    <property type="entry name" value="CHIT_BIND_RR_1"/>
    <property type="match status" value="1"/>
</dbReference>
<dbReference type="PROSITE" id="PS51155">
    <property type="entry name" value="CHIT_BIND_RR_2"/>
    <property type="match status" value="1"/>
</dbReference>
<gene>
    <name type="primary">ACP21</name>
</gene>
<organism>
    <name type="scientific">Locusta migratoria</name>
    <name type="common">Migratory locust</name>
    <dbReference type="NCBI Taxonomy" id="7004"/>
    <lineage>
        <taxon>Eukaryota</taxon>
        <taxon>Metazoa</taxon>
        <taxon>Ecdysozoa</taxon>
        <taxon>Arthropoda</taxon>
        <taxon>Hexapoda</taxon>
        <taxon>Insecta</taxon>
        <taxon>Pterygota</taxon>
        <taxon>Neoptera</taxon>
        <taxon>Polyneoptera</taxon>
        <taxon>Orthoptera</taxon>
        <taxon>Caelifera</taxon>
        <taxon>Acrididea</taxon>
        <taxon>Acridomorpha</taxon>
        <taxon>Acridoidea</taxon>
        <taxon>Acrididae</taxon>
        <taxon>Oedipodinae</taxon>
        <taxon>Locusta</taxon>
    </lineage>
</organism>
<accession>P81225</accession>
<accession>P81226</accession>
<proteinExistence type="evidence at protein level"/>
<name>CU21_LOCMI</name>
<sequence length="169" mass="16879">GYLGAPAVYAPGAPIAARAYAAPVAYAAPALRAAPVAYAAPAVAKVAAPVAYAAPAAVAAEYDPNPQYSYAYNVQDALTGDSKAQQETRDGDVVQGSYSLVEPDGSIRTVDYTADPVNGFNAVVHKEAGAHPAPVVAKVAAPVAYAAPAIAKVAAPLAYAAPAYGKASH</sequence>
<evidence type="ECO:0000255" key="1">
    <source>
        <dbReference type="PROSITE-ProRule" id="PRU00497"/>
    </source>
</evidence>
<protein>
    <recommendedName>
        <fullName>Cuticle protein 21</fullName>
    </recommendedName>
    <alternativeName>
        <fullName>LM-ACP 21</fullName>
    </alternativeName>
</protein>
<feature type="chain" id="PRO_0000196101" description="Cuticle protein 21">
    <location>
        <begin position="1"/>
        <end position="169"/>
    </location>
</feature>
<feature type="repeat" description="1">
    <location>
        <begin position="21"/>
        <end position="24"/>
    </location>
</feature>
<feature type="repeat" description="2">
    <location>
        <begin position="27"/>
        <end position="30"/>
    </location>
</feature>
<feature type="repeat" description="3">
    <location>
        <begin position="33"/>
        <end position="36"/>
    </location>
</feature>
<feature type="repeat" description="4">
    <location>
        <begin position="39"/>
        <end position="42"/>
    </location>
</feature>
<feature type="repeat" description="5">
    <location>
        <begin position="47"/>
        <end position="50"/>
    </location>
</feature>
<feature type="repeat" description="6">
    <location>
        <begin position="53"/>
        <end position="56"/>
    </location>
</feature>
<feature type="domain" description="Chitin-binding type R&amp;R" evidence="1">
    <location>
        <begin position="65"/>
        <end position="135"/>
    </location>
</feature>
<feature type="repeat" description="7">
    <location>
        <begin position="140"/>
        <end position="143"/>
    </location>
</feature>
<feature type="repeat" description="8">
    <location>
        <begin position="146"/>
        <end position="149"/>
    </location>
</feature>
<feature type="repeat" description="9">
    <location>
        <begin position="160"/>
        <end position="163"/>
    </location>
</feature>
<keyword id="KW-0193">Cuticle</keyword>
<keyword id="KW-0903">Direct protein sequencing</keyword>
<keyword id="KW-0677">Repeat</keyword>
<comment type="function">
    <text>Component of the cuticle of migratory locust which contains more than 100 different structural proteins.</text>
</comment>
<comment type="domain">
    <text>The tetrapeptide (A-A-P-[AV]) repeats found throughout the protein are also present in many proteins constituting the protective envelope of other species.</text>
</comment>